<keyword id="KW-0113">Calvin cycle</keyword>
<keyword id="KW-0120">Carbon dioxide fixation</keyword>
<keyword id="KW-0150">Chloroplast</keyword>
<keyword id="KW-1015">Disulfide bond</keyword>
<keyword id="KW-0456">Lyase</keyword>
<keyword id="KW-0460">Magnesium</keyword>
<keyword id="KW-0479">Metal-binding</keyword>
<keyword id="KW-0488">Methylation</keyword>
<keyword id="KW-0503">Monooxygenase</keyword>
<keyword id="KW-0560">Oxidoreductase</keyword>
<keyword id="KW-0601">Photorespiration</keyword>
<keyword id="KW-0602">Photosynthesis</keyword>
<keyword id="KW-0934">Plastid</keyword>
<reference key="1">
    <citation type="journal article" date="1992" name="Science">
        <title>Carnivorous plants: phylogeny and structural evolution.</title>
        <authorList>
            <person name="Albert V.A."/>
            <person name="Williams S.E."/>
            <person name="Chase M.W."/>
        </authorList>
    </citation>
    <scope>NUCLEOTIDE SEQUENCE [GENOMIC DNA]</scope>
    <source>
        <tissue>Leaf</tissue>
    </source>
</reference>
<protein>
    <recommendedName>
        <fullName evidence="1">Ribulose bisphosphate carboxylase large chain</fullName>
        <shortName evidence="1">RuBisCO large subunit</shortName>
        <ecNumber evidence="1">4.1.1.39</ecNumber>
    </recommendedName>
</protein>
<organism>
    <name type="scientific">Sedum rubrotinctum</name>
    <name type="common">Jelly bean plant</name>
    <name type="synonym">Stonecrop</name>
    <dbReference type="NCBI Taxonomy" id="3785"/>
    <lineage>
        <taxon>Eukaryota</taxon>
        <taxon>Viridiplantae</taxon>
        <taxon>Streptophyta</taxon>
        <taxon>Embryophyta</taxon>
        <taxon>Tracheophyta</taxon>
        <taxon>Spermatophyta</taxon>
        <taxon>Magnoliopsida</taxon>
        <taxon>eudicotyledons</taxon>
        <taxon>Gunneridae</taxon>
        <taxon>Pentapetalae</taxon>
        <taxon>Saxifragales</taxon>
        <taxon>Crassulaceae</taxon>
        <taxon>Sedum</taxon>
    </lineage>
</organism>
<proteinExistence type="inferred from homology"/>
<name>RBL_SEDRU</name>
<feature type="chain" id="PRO_0000062593" description="Ribulose bisphosphate carboxylase large chain">
    <location>
        <begin position="1" status="less than"/>
        <end position="450" status="greater than"/>
    </location>
</feature>
<feature type="active site" description="Proton acceptor" evidence="1">
    <location>
        <position position="165"/>
    </location>
</feature>
<feature type="active site" description="Proton acceptor" evidence="1">
    <location>
        <position position="284"/>
    </location>
</feature>
<feature type="binding site" description="in homodimeric partner" evidence="1">
    <location>
        <position position="113"/>
    </location>
    <ligand>
        <name>substrate</name>
    </ligand>
</feature>
<feature type="binding site" evidence="1">
    <location>
        <position position="163"/>
    </location>
    <ligand>
        <name>substrate</name>
    </ligand>
</feature>
<feature type="binding site" evidence="1">
    <location>
        <position position="167"/>
    </location>
    <ligand>
        <name>substrate</name>
    </ligand>
</feature>
<feature type="binding site" description="via carbamate group" evidence="1">
    <location>
        <position position="191"/>
    </location>
    <ligand>
        <name>Mg(2+)</name>
        <dbReference type="ChEBI" id="CHEBI:18420"/>
    </ligand>
</feature>
<feature type="binding site" evidence="1">
    <location>
        <position position="193"/>
    </location>
    <ligand>
        <name>Mg(2+)</name>
        <dbReference type="ChEBI" id="CHEBI:18420"/>
    </ligand>
</feature>
<feature type="binding site" evidence="1">
    <location>
        <position position="194"/>
    </location>
    <ligand>
        <name>Mg(2+)</name>
        <dbReference type="ChEBI" id="CHEBI:18420"/>
    </ligand>
</feature>
<feature type="binding site" evidence="1">
    <location>
        <position position="285"/>
    </location>
    <ligand>
        <name>substrate</name>
    </ligand>
</feature>
<feature type="binding site" evidence="1">
    <location>
        <position position="317"/>
    </location>
    <ligand>
        <name>substrate</name>
    </ligand>
</feature>
<feature type="binding site" evidence="1">
    <location>
        <position position="369"/>
    </location>
    <ligand>
        <name>substrate</name>
    </ligand>
</feature>
<feature type="site" description="Transition state stabilizer" evidence="1">
    <location>
        <position position="324"/>
    </location>
</feature>
<feature type="modified residue" description="N6,N6,N6-trimethyllysine" evidence="1">
    <location>
        <position position="4"/>
    </location>
</feature>
<feature type="modified residue" description="N6-carboxylysine" evidence="1">
    <location>
        <position position="191"/>
    </location>
</feature>
<feature type="disulfide bond" description="Interchain; in linked form" evidence="1">
    <location>
        <position position="237"/>
    </location>
</feature>
<feature type="non-terminal residue">
    <location>
        <position position="1"/>
    </location>
</feature>
<feature type="non-terminal residue">
    <location>
        <position position="450"/>
    </location>
</feature>
<dbReference type="EC" id="4.1.1.39" evidence="1"/>
<dbReference type="EMBL" id="L01956">
    <property type="protein sequence ID" value="AAA84612.2"/>
    <property type="molecule type" value="Genomic_DNA"/>
</dbReference>
<dbReference type="SMR" id="P28455"/>
<dbReference type="GO" id="GO:0009507">
    <property type="term" value="C:chloroplast"/>
    <property type="evidence" value="ECO:0007669"/>
    <property type="project" value="UniProtKB-SubCell"/>
</dbReference>
<dbReference type="GO" id="GO:0000287">
    <property type="term" value="F:magnesium ion binding"/>
    <property type="evidence" value="ECO:0007669"/>
    <property type="project" value="InterPro"/>
</dbReference>
<dbReference type="GO" id="GO:0004497">
    <property type="term" value="F:monooxygenase activity"/>
    <property type="evidence" value="ECO:0007669"/>
    <property type="project" value="UniProtKB-KW"/>
</dbReference>
<dbReference type="GO" id="GO:0016984">
    <property type="term" value="F:ribulose-bisphosphate carboxylase activity"/>
    <property type="evidence" value="ECO:0007669"/>
    <property type="project" value="UniProtKB-EC"/>
</dbReference>
<dbReference type="GO" id="GO:0009853">
    <property type="term" value="P:photorespiration"/>
    <property type="evidence" value="ECO:0007669"/>
    <property type="project" value="UniProtKB-KW"/>
</dbReference>
<dbReference type="GO" id="GO:0019253">
    <property type="term" value="P:reductive pentose-phosphate cycle"/>
    <property type="evidence" value="ECO:0007669"/>
    <property type="project" value="UniProtKB-KW"/>
</dbReference>
<dbReference type="CDD" id="cd08212">
    <property type="entry name" value="RuBisCO_large_I"/>
    <property type="match status" value="1"/>
</dbReference>
<dbReference type="FunFam" id="3.20.20.110:FF:000001">
    <property type="entry name" value="Ribulose bisphosphate carboxylase large chain"/>
    <property type="match status" value="1"/>
</dbReference>
<dbReference type="FunFam" id="3.30.70.150:FF:000001">
    <property type="entry name" value="Ribulose bisphosphate carboxylase large chain"/>
    <property type="match status" value="1"/>
</dbReference>
<dbReference type="Gene3D" id="3.20.20.110">
    <property type="entry name" value="Ribulose bisphosphate carboxylase, large subunit, C-terminal domain"/>
    <property type="match status" value="1"/>
</dbReference>
<dbReference type="Gene3D" id="3.30.70.150">
    <property type="entry name" value="RuBisCO large subunit, N-terminal domain"/>
    <property type="match status" value="1"/>
</dbReference>
<dbReference type="HAMAP" id="MF_01338">
    <property type="entry name" value="RuBisCO_L_type1"/>
    <property type="match status" value="1"/>
</dbReference>
<dbReference type="InterPro" id="IPR033966">
    <property type="entry name" value="RuBisCO"/>
</dbReference>
<dbReference type="InterPro" id="IPR020878">
    <property type="entry name" value="RuBisCo_large_chain_AS"/>
</dbReference>
<dbReference type="InterPro" id="IPR000685">
    <property type="entry name" value="RuBisCO_lsu_C"/>
</dbReference>
<dbReference type="InterPro" id="IPR036376">
    <property type="entry name" value="RuBisCO_lsu_C_sf"/>
</dbReference>
<dbReference type="InterPro" id="IPR017443">
    <property type="entry name" value="RuBisCO_lsu_fd_N"/>
</dbReference>
<dbReference type="InterPro" id="IPR036422">
    <property type="entry name" value="RuBisCO_lsu_N_sf"/>
</dbReference>
<dbReference type="InterPro" id="IPR020888">
    <property type="entry name" value="RuBisCO_lsuI"/>
</dbReference>
<dbReference type="NCBIfam" id="NF003252">
    <property type="entry name" value="PRK04208.1"/>
    <property type="match status" value="1"/>
</dbReference>
<dbReference type="PANTHER" id="PTHR42704">
    <property type="entry name" value="RIBULOSE BISPHOSPHATE CARBOXYLASE"/>
    <property type="match status" value="1"/>
</dbReference>
<dbReference type="PANTHER" id="PTHR42704:SF15">
    <property type="entry name" value="RIBULOSE BISPHOSPHATE CARBOXYLASE LARGE CHAIN"/>
    <property type="match status" value="1"/>
</dbReference>
<dbReference type="Pfam" id="PF00016">
    <property type="entry name" value="RuBisCO_large"/>
    <property type="match status" value="1"/>
</dbReference>
<dbReference type="Pfam" id="PF02788">
    <property type="entry name" value="RuBisCO_large_N"/>
    <property type="match status" value="1"/>
</dbReference>
<dbReference type="SFLD" id="SFLDG01052">
    <property type="entry name" value="RuBisCO"/>
    <property type="match status" value="1"/>
</dbReference>
<dbReference type="SFLD" id="SFLDS00014">
    <property type="entry name" value="RuBisCO"/>
    <property type="match status" value="1"/>
</dbReference>
<dbReference type="SFLD" id="SFLDG00301">
    <property type="entry name" value="RuBisCO-like_proteins"/>
    <property type="match status" value="1"/>
</dbReference>
<dbReference type="SUPFAM" id="SSF51649">
    <property type="entry name" value="RuBisCo, C-terminal domain"/>
    <property type="match status" value="1"/>
</dbReference>
<dbReference type="SUPFAM" id="SSF54966">
    <property type="entry name" value="RuBisCO, large subunit, small (N-terminal) domain"/>
    <property type="match status" value="1"/>
</dbReference>
<dbReference type="PROSITE" id="PS00157">
    <property type="entry name" value="RUBISCO_LARGE"/>
    <property type="match status" value="1"/>
</dbReference>
<accession>P28455</accession>
<geneLocation type="chloroplast"/>
<sequence>VGFKAGVKEYKLTYYTPDYETKDTDILAAFRVTPQPGVPPEEAGAAVAAESSTGTWTTVWTDGLTSLDRYKGRCYHIEPVAGEENQFIAYVAYPLDLFEEGSVTNMFTSIVGNVFGFKALRALRLEDLRIPVAYVKTFQGPPHGIQVERDKLNKYGRPLLGCTIKPKLGLSAKNYGRAVYECLRGGLDFTKDDENVNSQPFMRWRDRFLFCAEAIYKSQAETGEIKGHYLNATAGTCEEMMKRAVFARELGVPIVMHDYLTGGFTANTSLAHYCRDNGLLLHIHRAMHAVIDRQKNHGIHFRVLAKALRMSGGDHIHSGTVVGKLEGERDITLGFVDLLRDDFIEKDRSRGIYFTQDWVSLPGVLPVASGGIHVWHMPALTEIFGDDSVLQFGGGTLGHPWGNAPGAVANRVALEACVQARNEGRDLAREGNEIIREACKWSPELAAACE</sequence>
<gene>
    <name evidence="1" type="primary">rbcL</name>
</gene>
<comment type="function">
    <text evidence="1">RuBisCO catalyzes two reactions: the carboxylation of D-ribulose 1,5-bisphosphate, the primary event in carbon dioxide fixation, as well as the oxidative fragmentation of the pentose substrate in the photorespiration process. Both reactions occur simultaneously and in competition at the same active site.</text>
</comment>
<comment type="catalytic activity">
    <reaction evidence="1">
        <text>2 (2R)-3-phosphoglycerate + 2 H(+) = D-ribulose 1,5-bisphosphate + CO2 + H2O</text>
        <dbReference type="Rhea" id="RHEA:23124"/>
        <dbReference type="ChEBI" id="CHEBI:15377"/>
        <dbReference type="ChEBI" id="CHEBI:15378"/>
        <dbReference type="ChEBI" id="CHEBI:16526"/>
        <dbReference type="ChEBI" id="CHEBI:57870"/>
        <dbReference type="ChEBI" id="CHEBI:58272"/>
        <dbReference type="EC" id="4.1.1.39"/>
    </reaction>
</comment>
<comment type="catalytic activity">
    <reaction evidence="1">
        <text>D-ribulose 1,5-bisphosphate + O2 = 2-phosphoglycolate + (2R)-3-phosphoglycerate + 2 H(+)</text>
        <dbReference type="Rhea" id="RHEA:36631"/>
        <dbReference type="ChEBI" id="CHEBI:15378"/>
        <dbReference type="ChEBI" id="CHEBI:15379"/>
        <dbReference type="ChEBI" id="CHEBI:57870"/>
        <dbReference type="ChEBI" id="CHEBI:58033"/>
        <dbReference type="ChEBI" id="CHEBI:58272"/>
    </reaction>
</comment>
<comment type="cofactor">
    <cofactor evidence="1">
        <name>Mg(2+)</name>
        <dbReference type="ChEBI" id="CHEBI:18420"/>
    </cofactor>
    <text evidence="1">Binds 1 Mg(2+) ion per subunit.</text>
</comment>
<comment type="subunit">
    <text evidence="1">Heterohexadecamer of 8 large chains and 8 small chains; disulfide-linked. The disulfide link is formed within the large subunit homodimers.</text>
</comment>
<comment type="subcellular location">
    <subcellularLocation>
        <location>Plastid</location>
        <location>Chloroplast</location>
    </subcellularLocation>
</comment>
<comment type="PTM">
    <text evidence="1">The disulfide bond which can form in the large chain dimeric partners within the hexadecamer appears to be associated with oxidative stress and protein turnover.</text>
</comment>
<comment type="miscellaneous">
    <text evidence="1">The basic functional RuBisCO is composed of a large chain homodimer in a 'head-to-tail' conformation. In form I RuBisCO this homodimer is arranged in a barrel-like tetramer with the small subunits forming a tetrameric 'cap' on each end of the 'barrel'.</text>
</comment>
<comment type="similarity">
    <text evidence="1">Belongs to the RuBisCO large chain family. Type I subfamily.</text>
</comment>
<evidence type="ECO:0000255" key="1">
    <source>
        <dbReference type="HAMAP-Rule" id="MF_01338"/>
    </source>
</evidence>